<protein>
    <recommendedName>
        <fullName evidence="1">ATP synthase subunit c, chloroplastic</fullName>
    </recommendedName>
    <alternativeName>
        <fullName evidence="1">ATP synthase F(0) sector subunit c</fullName>
    </alternativeName>
    <alternativeName>
        <fullName evidence="1">ATPase subunit III</fullName>
    </alternativeName>
    <alternativeName>
        <fullName evidence="1">F-type ATPase subunit c</fullName>
        <shortName evidence="1">F-ATPase subunit c</shortName>
    </alternativeName>
    <alternativeName>
        <fullName evidence="1">Lipid-binding protein</fullName>
    </alternativeName>
</protein>
<reference key="1">
    <citation type="journal article" date="2006" name="Theor. Appl. Genet.">
        <title>Complete chloroplast genome sequences of Solanum bulbocastanum, Solanum lycopersicum and comparative analyses with other Solanaceae genomes.</title>
        <authorList>
            <person name="Daniell H."/>
            <person name="Lee S.-B."/>
            <person name="Grevich J."/>
            <person name="Saski C."/>
            <person name="Quesada-Vargas T."/>
            <person name="Guda C."/>
            <person name="Tomkins J."/>
            <person name="Jansen R.K."/>
        </authorList>
    </citation>
    <scope>NUCLEOTIDE SEQUENCE [LARGE SCALE GENOMIC DNA]</scope>
    <source>
        <strain>cv. LA3023</strain>
    </source>
</reference>
<reference key="2">
    <citation type="journal article" date="2006" name="J. Mol. Evol.">
        <title>Sequence of the tomato chloroplast DNA and evolutionary comparison of solanaceous plastid genomes.</title>
        <authorList>
            <person name="Kahlau S."/>
            <person name="Aspinall S."/>
            <person name="Gray J.C."/>
            <person name="Bock R."/>
        </authorList>
    </citation>
    <scope>NUCLEOTIDE SEQUENCE [LARGE SCALE GENOMIC DNA]</scope>
    <source>
        <strain>cv. IPA-6</strain>
    </source>
</reference>
<gene>
    <name evidence="1" type="primary">atpH</name>
</gene>
<evidence type="ECO:0000255" key="1">
    <source>
        <dbReference type="HAMAP-Rule" id="MF_01396"/>
    </source>
</evidence>
<dbReference type="EMBL" id="DQ347959">
    <property type="protein sequence ID" value="ABC56287.1"/>
    <property type="molecule type" value="Genomic_DNA"/>
</dbReference>
<dbReference type="EMBL" id="AM087200">
    <property type="protein sequence ID" value="CAJ32380.1"/>
    <property type="molecule type" value="Genomic_DNA"/>
</dbReference>
<dbReference type="RefSeq" id="AP_004915.1">
    <property type="nucleotide sequence ID" value="AC_000188.1"/>
</dbReference>
<dbReference type="RefSeq" id="YP_008563075.1">
    <property type="nucleotide sequence ID" value="NC_007898.3"/>
</dbReference>
<dbReference type="SMR" id="Q2MIB3"/>
<dbReference type="FunCoup" id="Q2MIB3">
    <property type="interactions" value="106"/>
</dbReference>
<dbReference type="STRING" id="4081.Q2MIB3"/>
<dbReference type="PaxDb" id="4081-Solyc09g059660.1.1"/>
<dbReference type="GeneID" id="3950479"/>
<dbReference type="KEGG" id="sly:3950479"/>
<dbReference type="eggNOG" id="KOG0232">
    <property type="taxonomic scope" value="Eukaryota"/>
</dbReference>
<dbReference type="InParanoid" id="Q2MIB3"/>
<dbReference type="OrthoDB" id="438052at2759"/>
<dbReference type="Proteomes" id="UP000004994">
    <property type="component" value="Chloroplast"/>
</dbReference>
<dbReference type="GO" id="GO:0009535">
    <property type="term" value="C:chloroplast thylakoid membrane"/>
    <property type="evidence" value="ECO:0007669"/>
    <property type="project" value="UniProtKB-SubCell"/>
</dbReference>
<dbReference type="GO" id="GO:0045259">
    <property type="term" value="C:proton-transporting ATP synthase complex"/>
    <property type="evidence" value="ECO:0007669"/>
    <property type="project" value="UniProtKB-KW"/>
</dbReference>
<dbReference type="GO" id="GO:0033177">
    <property type="term" value="C:proton-transporting two-sector ATPase complex, proton-transporting domain"/>
    <property type="evidence" value="ECO:0007669"/>
    <property type="project" value="InterPro"/>
</dbReference>
<dbReference type="GO" id="GO:0008289">
    <property type="term" value="F:lipid binding"/>
    <property type="evidence" value="ECO:0007669"/>
    <property type="project" value="UniProtKB-KW"/>
</dbReference>
<dbReference type="GO" id="GO:0046933">
    <property type="term" value="F:proton-transporting ATP synthase activity, rotational mechanism"/>
    <property type="evidence" value="ECO:0007669"/>
    <property type="project" value="UniProtKB-UniRule"/>
</dbReference>
<dbReference type="GO" id="GO:0015986">
    <property type="term" value="P:proton motive force-driven ATP synthesis"/>
    <property type="evidence" value="ECO:0000318"/>
    <property type="project" value="GO_Central"/>
</dbReference>
<dbReference type="CDD" id="cd18183">
    <property type="entry name" value="ATP-synt_Fo_c_ATPH"/>
    <property type="match status" value="1"/>
</dbReference>
<dbReference type="FunFam" id="1.20.20.10:FF:000001">
    <property type="entry name" value="ATP synthase subunit c, chloroplastic"/>
    <property type="match status" value="1"/>
</dbReference>
<dbReference type="Gene3D" id="1.20.20.10">
    <property type="entry name" value="F1F0 ATP synthase subunit C"/>
    <property type="match status" value="1"/>
</dbReference>
<dbReference type="HAMAP" id="MF_01396">
    <property type="entry name" value="ATP_synth_c_bact"/>
    <property type="match status" value="1"/>
</dbReference>
<dbReference type="InterPro" id="IPR005953">
    <property type="entry name" value="ATP_synth_csu_bac/chlpt"/>
</dbReference>
<dbReference type="InterPro" id="IPR000454">
    <property type="entry name" value="ATP_synth_F0_csu"/>
</dbReference>
<dbReference type="InterPro" id="IPR020537">
    <property type="entry name" value="ATP_synth_F0_csu_DDCD_BS"/>
</dbReference>
<dbReference type="InterPro" id="IPR038662">
    <property type="entry name" value="ATP_synth_F0_csu_sf"/>
</dbReference>
<dbReference type="InterPro" id="IPR002379">
    <property type="entry name" value="ATPase_proteolipid_c-like_dom"/>
</dbReference>
<dbReference type="InterPro" id="IPR035921">
    <property type="entry name" value="F/V-ATP_Csub_sf"/>
</dbReference>
<dbReference type="NCBIfam" id="TIGR01260">
    <property type="entry name" value="ATP_synt_c"/>
    <property type="match status" value="1"/>
</dbReference>
<dbReference type="NCBIfam" id="NF005608">
    <property type="entry name" value="PRK07354.1"/>
    <property type="match status" value="1"/>
</dbReference>
<dbReference type="PANTHER" id="PTHR10031">
    <property type="entry name" value="ATP SYNTHASE LIPID-BINDING PROTEIN, MITOCHONDRIAL"/>
    <property type="match status" value="1"/>
</dbReference>
<dbReference type="PANTHER" id="PTHR10031:SF0">
    <property type="entry name" value="ATPASE PROTEIN 9"/>
    <property type="match status" value="1"/>
</dbReference>
<dbReference type="Pfam" id="PF00137">
    <property type="entry name" value="ATP-synt_C"/>
    <property type="match status" value="1"/>
</dbReference>
<dbReference type="PRINTS" id="PR00124">
    <property type="entry name" value="ATPASEC"/>
</dbReference>
<dbReference type="SUPFAM" id="SSF81333">
    <property type="entry name" value="F1F0 ATP synthase subunit C"/>
    <property type="match status" value="1"/>
</dbReference>
<dbReference type="PROSITE" id="PS00605">
    <property type="entry name" value="ATPASE_C"/>
    <property type="match status" value="1"/>
</dbReference>
<feature type="chain" id="PRO_0000277325" description="ATP synthase subunit c, chloroplastic">
    <location>
        <begin position="1"/>
        <end position="81"/>
    </location>
</feature>
<feature type="transmembrane region" description="Helical" evidence="1">
    <location>
        <begin position="3"/>
        <end position="23"/>
    </location>
</feature>
<feature type="transmembrane region" description="Helical" evidence="1">
    <location>
        <begin position="57"/>
        <end position="77"/>
    </location>
</feature>
<feature type="site" description="Reversibly protonated during proton transport" evidence="1">
    <location>
        <position position="61"/>
    </location>
</feature>
<name>ATPH_SOLLC</name>
<comment type="function">
    <text evidence="1">F(1)F(0) ATP synthase produces ATP from ADP in the presence of a proton or sodium gradient. F-type ATPases consist of two structural domains, F(1) containing the extramembraneous catalytic core and F(0) containing the membrane proton channel, linked together by a central stalk and a peripheral stalk. During catalysis, ATP synthesis in the catalytic domain of F(1) is coupled via a rotary mechanism of the central stalk subunits to proton translocation.</text>
</comment>
<comment type="function">
    <text evidence="1">Key component of the F(0) channel; it plays a direct role in translocation across the membrane. A homomeric c-ring of between 10-14 subunits forms the central stalk rotor element with the F(1) delta and epsilon subunits.</text>
</comment>
<comment type="subunit">
    <text evidence="1">F-type ATPases have 2 components, F(1) - the catalytic core - and F(0) - the membrane proton channel. F(1) has five subunits: alpha(3), beta(3), gamma(1), delta(1), epsilon(1). F(0) has four main subunits: a(1), b(1), b'(1) and c(10-14). The alpha and beta chains form an alternating ring which encloses part of the gamma chain. F(1) is attached to F(0) by a central stalk formed by the gamma and epsilon chains, while a peripheral stalk is formed by the delta, b and b' chains.</text>
</comment>
<comment type="subcellular location">
    <subcellularLocation>
        <location evidence="1">Plastid</location>
        <location evidence="1">Chloroplast thylakoid membrane</location>
        <topology evidence="1">Multi-pass membrane protein</topology>
    </subcellularLocation>
</comment>
<comment type="miscellaneous">
    <text>In plastids the F-type ATPase is also known as CF(1)CF(0).</text>
</comment>
<comment type="similarity">
    <text evidence="1">Belongs to the ATPase C chain family.</text>
</comment>
<keyword id="KW-0066">ATP synthesis</keyword>
<keyword id="KW-0138">CF(0)</keyword>
<keyword id="KW-0150">Chloroplast</keyword>
<keyword id="KW-0375">Hydrogen ion transport</keyword>
<keyword id="KW-0406">Ion transport</keyword>
<keyword id="KW-0446">Lipid-binding</keyword>
<keyword id="KW-0472">Membrane</keyword>
<keyword id="KW-0934">Plastid</keyword>
<keyword id="KW-1185">Reference proteome</keyword>
<keyword id="KW-0793">Thylakoid</keyword>
<keyword id="KW-0812">Transmembrane</keyword>
<keyword id="KW-1133">Transmembrane helix</keyword>
<keyword id="KW-0813">Transport</keyword>
<proteinExistence type="inferred from homology"/>
<organism>
    <name type="scientific">Solanum lycopersicum</name>
    <name type="common">Tomato</name>
    <name type="synonym">Lycopersicon esculentum</name>
    <dbReference type="NCBI Taxonomy" id="4081"/>
    <lineage>
        <taxon>Eukaryota</taxon>
        <taxon>Viridiplantae</taxon>
        <taxon>Streptophyta</taxon>
        <taxon>Embryophyta</taxon>
        <taxon>Tracheophyta</taxon>
        <taxon>Spermatophyta</taxon>
        <taxon>Magnoliopsida</taxon>
        <taxon>eudicotyledons</taxon>
        <taxon>Gunneridae</taxon>
        <taxon>Pentapetalae</taxon>
        <taxon>asterids</taxon>
        <taxon>lamiids</taxon>
        <taxon>Solanales</taxon>
        <taxon>Solanaceae</taxon>
        <taxon>Solanoideae</taxon>
        <taxon>Solaneae</taxon>
        <taxon>Solanum</taxon>
        <taxon>Solanum subgen. Lycopersicon</taxon>
    </lineage>
</organism>
<geneLocation type="chloroplast"/>
<sequence>MNPLISAASVIAAGLAVGLASIGPGVGQGTAAGQAVEGIARQPEAEGKIRGTLLLSLAFMEALTIYGLVVALALLFANPFV</sequence>
<accession>Q2MIB3</accession>